<evidence type="ECO:0000255" key="1"/>
<evidence type="ECO:0000255" key="2">
    <source>
        <dbReference type="PROSITE-ProRule" id="PRU00175"/>
    </source>
</evidence>
<evidence type="ECO:0000255" key="3">
    <source>
        <dbReference type="PROSITE-ProRule" id="PRU00468"/>
    </source>
</evidence>
<evidence type="ECO:0000269" key="4">
    <source>
    </source>
</evidence>
<evidence type="ECO:0000269" key="5">
    <source>
    </source>
</evidence>
<evidence type="ECO:0000305" key="6"/>
<sequence length="564" mass="64709">MGVVNLLSRSSFPSVDSYLALSVLVAIVASVTVFTTFRSQPELQKLIEEELRNNTRLSSAYGLNIEALSGHTFFQIAHYILSDTTLIWVAINSYFAILAVCTRLIIKLTFKELARQEENVARQAFFCYVLLTIVYLSVVIGPQKGHRVMPWMIWGGICAFLSHLQFITCQRLKHISPSCDRGSQKISFLSLFLFFVSIAMTFLISRFQHHLTWQPAVLLYFDCLLAVFRSTYILFRCISSSRVFSFNPDSVRHFNYWLELITNFVCELIQMLSFAQLLAFSPGLNLTSIFFLYHMKLTYNCMTEQLSRHRNHKKIFEHIERSYPSVKCANGDDRCVVCWELLGTSRRLPCSHQFHDWCLMWWLAQDSSCPTCRCTIPSPQDQIRQPPEVGNSTRLRFNGGSFGFVHFPAFTLEVAANFGPFFGRAAEPTEEQLQTMLEQVREMFPQMSVDIIMTDLRQSGSAQSTIENILEGRIGMNASFMPGGVLDDELSDESENEIEYEEPAEIVQEPDNGRQRTWTKLSSSSGDEDLSYYEIQRAKMIETYRRKYLESDKAADLRAMGITE</sequence>
<feature type="chain" id="PRO_0000056330" description="E3 ubiquitin-protein ligase hrd-like protein 1">
    <location>
        <begin position="1"/>
        <end position="564"/>
    </location>
</feature>
<feature type="transmembrane region" description="Helical" evidence="1">
    <location>
        <begin position="17"/>
        <end position="37"/>
    </location>
</feature>
<feature type="transmembrane region" description="Helical" evidence="1">
    <location>
        <begin position="61"/>
        <end position="81"/>
    </location>
</feature>
<feature type="transmembrane region" description="Helical" evidence="1">
    <location>
        <begin position="86"/>
        <end position="106"/>
    </location>
</feature>
<feature type="transmembrane region" description="Helical" evidence="1">
    <location>
        <begin position="123"/>
        <end position="143"/>
    </location>
</feature>
<feature type="transmembrane region" description="Helical" evidence="1">
    <location>
        <begin position="148"/>
        <end position="168"/>
    </location>
</feature>
<feature type="transmembrane region" description="Helical" evidence="1">
    <location>
        <begin position="185"/>
        <end position="205"/>
    </location>
</feature>
<feature type="transmembrane region" description="Helical" evidence="1">
    <location>
        <begin position="215"/>
        <end position="235"/>
    </location>
</feature>
<feature type="transmembrane region" description="Helical" evidence="1">
    <location>
        <begin position="272"/>
        <end position="292"/>
    </location>
</feature>
<feature type="domain" description="CUE" evidence="3">
    <location>
        <begin position="432"/>
        <end position="474"/>
    </location>
</feature>
<feature type="zinc finger region" description="RING-type; atypical" evidence="2">
    <location>
        <begin position="335"/>
        <end position="373"/>
    </location>
</feature>
<feature type="glycosylation site" description="N-linked (GlcNAc...) asparagine" evidence="4">
    <location>
        <position position="53"/>
    </location>
</feature>
<protein>
    <recommendedName>
        <fullName>E3 ubiquitin-protein ligase hrd-like protein 1</fullName>
    </recommendedName>
</protein>
<accession>P90859</accession>
<accession>P90852</accession>
<reference key="1">
    <citation type="journal article" date="1998" name="Science">
        <title>Genome sequence of the nematode C. elegans: a platform for investigating biology.</title>
        <authorList>
            <consortium name="The C. elegans sequencing consortium"/>
        </authorList>
    </citation>
    <scope>NUCLEOTIDE SEQUENCE [LARGE SCALE GENOMIC DNA]</scope>
    <source>
        <strain>Bristol N2</strain>
    </source>
</reference>
<reference key="2">
    <citation type="journal article" date="1999" name="FEBS Lett.">
        <title>The autocrine motility factor receptor gene encodes a novel type of seven transmembrane protein.</title>
        <authorList>
            <person name="Shimizu K."/>
            <person name="Tani M."/>
            <person name="Watanabe H."/>
            <person name="Nagamachi Y."/>
            <person name="Niinaka Y."/>
            <person name="Shiroishi T."/>
            <person name="Ohwada S."/>
            <person name="Raz A."/>
            <person name="Yokota J."/>
        </authorList>
    </citation>
    <scope>IDENTIFICATION</scope>
</reference>
<reference key="3">
    <citation type="journal article" date="2007" name="Genes Cells">
        <title>ER E3 ubiquitin ligase HRD-1 and its specific partner chaperone BiP play important roles in ERAD and developmental growth in Caenorhabditis elegans.</title>
        <authorList>
            <person name="Sasagawa Y."/>
            <person name="Yamanaka K."/>
            <person name="Ogura T."/>
        </authorList>
    </citation>
    <scope>IDENTIFICATION</scope>
</reference>
<reference key="4">
    <citation type="journal article" date="2007" name="Mol. Cell. Proteomics">
        <title>Proteomics reveals N-linked glycoprotein diversity in Caenorhabditis elegans and suggests an atypical translocation mechanism for integral membrane proteins.</title>
        <authorList>
            <person name="Kaji H."/>
            <person name="Kamiie J."/>
            <person name="Kawakami H."/>
            <person name="Kido K."/>
            <person name="Yamauchi Y."/>
            <person name="Shinkawa T."/>
            <person name="Taoka M."/>
            <person name="Takahashi N."/>
            <person name="Isobe T."/>
        </authorList>
    </citation>
    <scope>GLYCOSYLATION [LARGE SCALE ANALYSIS] AT ASN-53</scope>
    <scope>IDENTIFICATION BY MASS SPECTROMETRY</scope>
    <source>
        <strain>Bristol N2</strain>
    </source>
</reference>
<reference key="5">
    <citation type="journal article" date="2008" name="Proc. Natl. Acad. Sci. U.S.A.">
        <title>Hypothesis-based RNAi screening identifies neuroprotective genes in a Parkinson's disease model.</title>
        <authorList>
            <person name="Hamamichi S."/>
            <person name="Rivas R.N."/>
            <person name="Knight A.L."/>
            <person name="Cao S."/>
            <person name="Caldwell K.A."/>
            <person name="Caldwell G.A."/>
        </authorList>
    </citation>
    <scope>FUNCTION</scope>
</reference>
<gene>
    <name type="primary">hrdl-1</name>
    <name type="ORF">F26E4.11</name>
</gene>
<dbReference type="EMBL" id="Z81070">
    <property type="protein sequence ID" value="CAB03009.1"/>
    <property type="molecule type" value="Genomic_DNA"/>
</dbReference>
<dbReference type="EMBL" id="Z81075">
    <property type="protein sequence ID" value="CAB03009.1"/>
    <property type="status" value="JOINED"/>
    <property type="molecule type" value="Genomic_DNA"/>
</dbReference>
<dbReference type="PIR" id="T21423">
    <property type="entry name" value="T21423"/>
</dbReference>
<dbReference type="RefSeq" id="NP_492602.2">
    <property type="nucleotide sequence ID" value="NM_060201.5"/>
</dbReference>
<dbReference type="SMR" id="P90859"/>
<dbReference type="BioGRID" id="38256">
    <property type="interactions" value="1"/>
</dbReference>
<dbReference type="FunCoup" id="P90859">
    <property type="interactions" value="1104"/>
</dbReference>
<dbReference type="STRING" id="6239.F26E4.11.1"/>
<dbReference type="GlyCosmos" id="P90859">
    <property type="glycosylation" value="1 site, No reported glycans"/>
</dbReference>
<dbReference type="iPTMnet" id="P90859"/>
<dbReference type="PaxDb" id="6239-F26E4.11"/>
<dbReference type="EnsemblMetazoa" id="F26E4.11.1">
    <property type="protein sequence ID" value="F26E4.11.1"/>
    <property type="gene ID" value="WBGene00009164"/>
</dbReference>
<dbReference type="GeneID" id="172833"/>
<dbReference type="KEGG" id="cel:CELE_F26E4.11"/>
<dbReference type="AGR" id="WB:WBGene00009164"/>
<dbReference type="CTD" id="172833"/>
<dbReference type="WormBase" id="F26E4.11">
    <property type="protein sequence ID" value="CE51378"/>
    <property type="gene ID" value="WBGene00009164"/>
    <property type="gene designation" value="hrdl-1"/>
</dbReference>
<dbReference type="eggNOG" id="KOG0802">
    <property type="taxonomic scope" value="Eukaryota"/>
</dbReference>
<dbReference type="GeneTree" id="ENSGT00940000156482"/>
<dbReference type="HOGENOM" id="CLU_015061_1_0_1"/>
<dbReference type="InParanoid" id="P90859"/>
<dbReference type="OMA" id="YWLELIT"/>
<dbReference type="OrthoDB" id="3824970at2759"/>
<dbReference type="PhylomeDB" id="P90859"/>
<dbReference type="Reactome" id="R-CEL-532668">
    <property type="pathway name" value="N-glycan trimming in the ER and Calnexin/Calreticulin cycle"/>
</dbReference>
<dbReference type="PRO" id="PR:P90859"/>
<dbReference type="Proteomes" id="UP000001940">
    <property type="component" value="Chromosome I"/>
</dbReference>
<dbReference type="Bgee" id="WBGene00009164">
    <property type="expression patterns" value="Expressed in adult organism and 4 other cell types or tissues"/>
</dbReference>
<dbReference type="GO" id="GO:0005829">
    <property type="term" value="C:cytosol"/>
    <property type="evidence" value="ECO:0000318"/>
    <property type="project" value="GO_Central"/>
</dbReference>
<dbReference type="GO" id="GO:0005783">
    <property type="term" value="C:endoplasmic reticulum"/>
    <property type="evidence" value="ECO:0000318"/>
    <property type="project" value="GO_Central"/>
</dbReference>
<dbReference type="GO" id="GO:0016020">
    <property type="term" value="C:membrane"/>
    <property type="evidence" value="ECO:0007669"/>
    <property type="project" value="UniProtKB-SubCell"/>
</dbReference>
<dbReference type="GO" id="GO:0000151">
    <property type="term" value="C:ubiquitin ligase complex"/>
    <property type="evidence" value="ECO:0000318"/>
    <property type="project" value="GO_Central"/>
</dbReference>
<dbReference type="GO" id="GO:0043130">
    <property type="term" value="F:ubiquitin binding"/>
    <property type="evidence" value="ECO:0007669"/>
    <property type="project" value="InterPro"/>
</dbReference>
<dbReference type="GO" id="GO:0061630">
    <property type="term" value="F:ubiquitin protein ligase activity"/>
    <property type="evidence" value="ECO:0000318"/>
    <property type="project" value="GO_Central"/>
</dbReference>
<dbReference type="GO" id="GO:0008270">
    <property type="term" value="F:zinc ion binding"/>
    <property type="evidence" value="ECO:0007669"/>
    <property type="project" value="UniProtKB-KW"/>
</dbReference>
<dbReference type="GO" id="GO:0030968">
    <property type="term" value="P:endoplasmic reticulum unfolded protein response"/>
    <property type="evidence" value="ECO:0000318"/>
    <property type="project" value="GO_Central"/>
</dbReference>
<dbReference type="GO" id="GO:0035264">
    <property type="term" value="P:multicellular organism growth"/>
    <property type="evidence" value="ECO:0000316"/>
    <property type="project" value="WormBase"/>
</dbReference>
<dbReference type="GO" id="GO:0070936">
    <property type="term" value="P:protein K48-linked ubiquitination"/>
    <property type="evidence" value="ECO:0000318"/>
    <property type="project" value="GO_Central"/>
</dbReference>
<dbReference type="GO" id="GO:0006511">
    <property type="term" value="P:ubiquitin-dependent protein catabolic process"/>
    <property type="evidence" value="ECO:0000318"/>
    <property type="project" value="GO_Central"/>
</dbReference>
<dbReference type="CDD" id="cd14421">
    <property type="entry name" value="CUE_AMFR"/>
    <property type="match status" value="1"/>
</dbReference>
<dbReference type="FunFam" id="1.10.8.10:FF:000127">
    <property type="entry name" value="E3 ubiquitin-protein ligase AMFR"/>
    <property type="match status" value="1"/>
</dbReference>
<dbReference type="Gene3D" id="1.10.8.10">
    <property type="entry name" value="DNA helicase RuvA subunit, C-terminal domain"/>
    <property type="match status" value="1"/>
</dbReference>
<dbReference type="Gene3D" id="3.30.40.10">
    <property type="entry name" value="Zinc/RING finger domain, C3HC4 (zinc finger)"/>
    <property type="match status" value="1"/>
</dbReference>
<dbReference type="InterPro" id="IPR003892">
    <property type="entry name" value="CUE"/>
</dbReference>
<dbReference type="InterPro" id="IPR001841">
    <property type="entry name" value="Znf_RING"/>
</dbReference>
<dbReference type="InterPro" id="IPR013083">
    <property type="entry name" value="Znf_RING/FYVE/PHD"/>
</dbReference>
<dbReference type="PANTHER" id="PTHR15067:SF5">
    <property type="entry name" value="E3 UBIQUITIN-PROTEIN LIGASE AMFR"/>
    <property type="match status" value="1"/>
</dbReference>
<dbReference type="PANTHER" id="PTHR15067">
    <property type="entry name" value="E3 UBIQUITIN-PROTEIN LIGASE RNF8"/>
    <property type="match status" value="1"/>
</dbReference>
<dbReference type="Pfam" id="PF02845">
    <property type="entry name" value="CUE"/>
    <property type="match status" value="1"/>
</dbReference>
<dbReference type="Pfam" id="PF13639">
    <property type="entry name" value="zf-RING_2"/>
    <property type="match status" value="1"/>
</dbReference>
<dbReference type="SMART" id="SM00546">
    <property type="entry name" value="CUE"/>
    <property type="match status" value="1"/>
</dbReference>
<dbReference type="SMART" id="SM00184">
    <property type="entry name" value="RING"/>
    <property type="match status" value="1"/>
</dbReference>
<dbReference type="SUPFAM" id="SSF57850">
    <property type="entry name" value="RING/U-box"/>
    <property type="match status" value="1"/>
</dbReference>
<dbReference type="PROSITE" id="PS51140">
    <property type="entry name" value="CUE"/>
    <property type="match status" value="1"/>
</dbReference>
<dbReference type="PROSITE" id="PS50089">
    <property type="entry name" value="ZF_RING_2"/>
    <property type="match status" value="1"/>
</dbReference>
<organism>
    <name type="scientific">Caenorhabditis elegans</name>
    <dbReference type="NCBI Taxonomy" id="6239"/>
    <lineage>
        <taxon>Eukaryota</taxon>
        <taxon>Metazoa</taxon>
        <taxon>Ecdysozoa</taxon>
        <taxon>Nematoda</taxon>
        <taxon>Chromadorea</taxon>
        <taxon>Rhabditida</taxon>
        <taxon>Rhabditina</taxon>
        <taxon>Rhabditomorpha</taxon>
        <taxon>Rhabditoidea</taxon>
        <taxon>Rhabditidae</taxon>
        <taxon>Peloderinae</taxon>
        <taxon>Caenorhabditis</taxon>
    </lineage>
</organism>
<name>HRDL1_CAEEL</name>
<keyword id="KW-0325">Glycoprotein</keyword>
<keyword id="KW-0472">Membrane</keyword>
<keyword id="KW-0479">Metal-binding</keyword>
<keyword id="KW-1185">Reference proteome</keyword>
<keyword id="KW-0812">Transmembrane</keyword>
<keyword id="KW-1133">Transmembrane helix</keyword>
<keyword id="KW-0862">Zinc</keyword>
<keyword id="KW-0863">Zinc-finger</keyword>
<proteinExistence type="evidence at protein level"/>
<comment type="function">
    <text evidence="5">Proposed to have a role in neuroprotection.</text>
</comment>
<comment type="subcellular location">
    <subcellularLocation>
        <location evidence="6">Membrane</location>
        <topology evidence="6">Multi-pass membrane protein</topology>
    </subcellularLocation>
</comment>